<keyword id="KW-0120">Carbon dioxide fixation</keyword>
<keyword id="KW-0456">Lyase</keyword>
<keyword id="KW-0460">Magnesium</keyword>
<keyword id="KW-1185">Reference proteome</keyword>
<name>CAPP_ECO27</name>
<evidence type="ECO:0000255" key="1">
    <source>
        <dbReference type="HAMAP-Rule" id="MF_00595"/>
    </source>
</evidence>
<reference key="1">
    <citation type="journal article" date="2009" name="J. Bacteriol.">
        <title>Complete genome sequence and comparative genome analysis of enteropathogenic Escherichia coli O127:H6 strain E2348/69.</title>
        <authorList>
            <person name="Iguchi A."/>
            <person name="Thomson N.R."/>
            <person name="Ogura Y."/>
            <person name="Saunders D."/>
            <person name="Ooka T."/>
            <person name="Henderson I.R."/>
            <person name="Harris D."/>
            <person name="Asadulghani M."/>
            <person name="Kurokawa K."/>
            <person name="Dean P."/>
            <person name="Kenny B."/>
            <person name="Quail M.A."/>
            <person name="Thurston S."/>
            <person name="Dougan G."/>
            <person name="Hayashi T."/>
            <person name="Parkhill J."/>
            <person name="Frankel G."/>
        </authorList>
    </citation>
    <scope>NUCLEOTIDE SEQUENCE [LARGE SCALE GENOMIC DNA]</scope>
    <source>
        <strain>E2348/69 / EPEC</strain>
    </source>
</reference>
<comment type="function">
    <text evidence="1">Forms oxaloacetate, a four-carbon dicarboxylic acid source for the tricarboxylic acid cycle.</text>
</comment>
<comment type="catalytic activity">
    <reaction evidence="1">
        <text>oxaloacetate + phosphate = phosphoenolpyruvate + hydrogencarbonate</text>
        <dbReference type="Rhea" id="RHEA:28370"/>
        <dbReference type="ChEBI" id="CHEBI:16452"/>
        <dbReference type="ChEBI" id="CHEBI:17544"/>
        <dbReference type="ChEBI" id="CHEBI:43474"/>
        <dbReference type="ChEBI" id="CHEBI:58702"/>
        <dbReference type="EC" id="4.1.1.31"/>
    </reaction>
</comment>
<comment type="cofactor">
    <cofactor evidence="1">
        <name>Mg(2+)</name>
        <dbReference type="ChEBI" id="CHEBI:18420"/>
    </cofactor>
</comment>
<comment type="similarity">
    <text evidence="1">Belongs to the PEPCase type 1 family.</text>
</comment>
<sequence>MNEQYSALRSNVSMLGKVLGETIKDALGEHILERVETIRKLSKSSRAGNDANRQELLTTLQNLSNDELLPVARAFSQFLNLANTAEQYHSISPKGEAASNPEVIARTLRKLKNQPELSEDTIKKAVESLSLELVLTAHPTEITRRTLIHKMVEVNACLKQLDNKDIADYEHNQLMRRLRQLIAQSWHTDEIRKLRPSPVDEAKWGFAVVENSLWQGVPNYLRELNEQLEENLGYKLPVEFVPVRFTSWMGGDRDGNPNVTADITRHVLLLSRWKATDLFLKDIQVLVSELSMVEATPELLALVGEEGAAEPYRYLMKNLRSRLMATQAWLEARLKGEELPKPEGLLTQNEELWEPLYACYQSLQACGMGIIANGDLLDTLRRVKCFGVPLVRIDIRQESTRHTEALGELTRYLGIGDYESWSEADKQAFLIRELNSKRPLLPRNWQPSAETREVLDTCQVIAEAPQGSIAAYVISMAKTPSDVLAVHLLLKEAGIGFAMPVAPLFETLDDLNNANDVMTQLLNIDWYRGLIQGKQMVMIGYSDSAKDAGVMAASWAQYQAQDALIKTCEKAGIELTLFHGRGGSIGRGGAPAHAALLSQPPGSLKGGLRVTEQGEMIRFKYGLPEITVSSLSLYTGAILEANLLPPPEPKESWRRIMDELSVISCDVYRGYVRENKDFVPYFRSATPEQELGKLPLGSRPAKRRPTGGVESLRAIPWIFAWTQNRLMLPAWLGAGTALQKVVEDGKQSELEAMCRDWPFFSTRLGMLEMVFAKADLWLAEYYDQRLVDKALWPLGKELRNLQEEDIKVVLAIANDSHLMADLPWIAESIQLRNIYTDPLNVLQAELLHRSRQAEKEGQEPDPRVEQALMVTIAGIAAGMRNTG</sequence>
<dbReference type="EC" id="4.1.1.31" evidence="1"/>
<dbReference type="EMBL" id="FM180568">
    <property type="protein sequence ID" value="CAS11816.1"/>
    <property type="molecule type" value="Genomic_DNA"/>
</dbReference>
<dbReference type="RefSeq" id="WP_001005586.1">
    <property type="nucleotide sequence ID" value="NC_011601.1"/>
</dbReference>
<dbReference type="SMR" id="B7UNT2"/>
<dbReference type="KEGG" id="ecg:E2348C_4268"/>
<dbReference type="HOGENOM" id="CLU_006557_2_0_6"/>
<dbReference type="Proteomes" id="UP000008205">
    <property type="component" value="Chromosome"/>
</dbReference>
<dbReference type="GO" id="GO:0005829">
    <property type="term" value="C:cytosol"/>
    <property type="evidence" value="ECO:0007669"/>
    <property type="project" value="TreeGrafter"/>
</dbReference>
<dbReference type="GO" id="GO:0000287">
    <property type="term" value="F:magnesium ion binding"/>
    <property type="evidence" value="ECO:0007669"/>
    <property type="project" value="UniProtKB-UniRule"/>
</dbReference>
<dbReference type="GO" id="GO:0008964">
    <property type="term" value="F:phosphoenolpyruvate carboxylase activity"/>
    <property type="evidence" value="ECO:0007669"/>
    <property type="project" value="UniProtKB-UniRule"/>
</dbReference>
<dbReference type="GO" id="GO:0015977">
    <property type="term" value="P:carbon fixation"/>
    <property type="evidence" value="ECO:0007669"/>
    <property type="project" value="UniProtKB-UniRule"/>
</dbReference>
<dbReference type="GO" id="GO:0006107">
    <property type="term" value="P:oxaloacetate metabolic process"/>
    <property type="evidence" value="ECO:0007669"/>
    <property type="project" value="UniProtKB-UniRule"/>
</dbReference>
<dbReference type="GO" id="GO:0006099">
    <property type="term" value="P:tricarboxylic acid cycle"/>
    <property type="evidence" value="ECO:0007669"/>
    <property type="project" value="InterPro"/>
</dbReference>
<dbReference type="FunFam" id="1.20.1440.90:FF:000002">
    <property type="entry name" value="Phosphoenolpyruvate carboxylase"/>
    <property type="match status" value="1"/>
</dbReference>
<dbReference type="Gene3D" id="1.20.1440.90">
    <property type="entry name" value="Phosphoenolpyruvate/pyruvate domain"/>
    <property type="match status" value="1"/>
</dbReference>
<dbReference type="HAMAP" id="MF_00595">
    <property type="entry name" value="PEPcase_type1"/>
    <property type="match status" value="1"/>
</dbReference>
<dbReference type="InterPro" id="IPR021135">
    <property type="entry name" value="PEP_COase"/>
</dbReference>
<dbReference type="InterPro" id="IPR022805">
    <property type="entry name" value="PEP_COase_bac/pln-type"/>
</dbReference>
<dbReference type="InterPro" id="IPR018129">
    <property type="entry name" value="PEP_COase_Lys_AS"/>
</dbReference>
<dbReference type="InterPro" id="IPR033129">
    <property type="entry name" value="PEPCASE_His_AS"/>
</dbReference>
<dbReference type="InterPro" id="IPR015813">
    <property type="entry name" value="Pyrv/PenolPyrv_kinase-like_dom"/>
</dbReference>
<dbReference type="NCBIfam" id="NF000584">
    <property type="entry name" value="PRK00009.1"/>
    <property type="match status" value="1"/>
</dbReference>
<dbReference type="PANTHER" id="PTHR30523">
    <property type="entry name" value="PHOSPHOENOLPYRUVATE CARBOXYLASE"/>
    <property type="match status" value="1"/>
</dbReference>
<dbReference type="PANTHER" id="PTHR30523:SF6">
    <property type="entry name" value="PHOSPHOENOLPYRUVATE CARBOXYLASE"/>
    <property type="match status" value="1"/>
</dbReference>
<dbReference type="Pfam" id="PF00311">
    <property type="entry name" value="PEPcase"/>
    <property type="match status" value="1"/>
</dbReference>
<dbReference type="PRINTS" id="PR00150">
    <property type="entry name" value="PEPCARBXLASE"/>
</dbReference>
<dbReference type="SUPFAM" id="SSF51621">
    <property type="entry name" value="Phosphoenolpyruvate/pyruvate domain"/>
    <property type="match status" value="1"/>
</dbReference>
<dbReference type="PROSITE" id="PS00781">
    <property type="entry name" value="PEPCASE_1"/>
    <property type="match status" value="1"/>
</dbReference>
<dbReference type="PROSITE" id="PS00393">
    <property type="entry name" value="PEPCASE_2"/>
    <property type="match status" value="1"/>
</dbReference>
<organism>
    <name type="scientific">Escherichia coli O127:H6 (strain E2348/69 / EPEC)</name>
    <dbReference type="NCBI Taxonomy" id="574521"/>
    <lineage>
        <taxon>Bacteria</taxon>
        <taxon>Pseudomonadati</taxon>
        <taxon>Pseudomonadota</taxon>
        <taxon>Gammaproteobacteria</taxon>
        <taxon>Enterobacterales</taxon>
        <taxon>Enterobacteriaceae</taxon>
        <taxon>Escherichia</taxon>
    </lineage>
</organism>
<gene>
    <name evidence="1" type="primary">ppc</name>
    <name type="ordered locus">E2348C_4268</name>
</gene>
<accession>B7UNT2</accession>
<feature type="chain" id="PRO_1000146978" description="Phosphoenolpyruvate carboxylase">
    <location>
        <begin position="1"/>
        <end position="883"/>
    </location>
</feature>
<feature type="active site" evidence="1">
    <location>
        <position position="138"/>
    </location>
</feature>
<feature type="active site" evidence="1">
    <location>
        <position position="546"/>
    </location>
</feature>
<protein>
    <recommendedName>
        <fullName evidence="1">Phosphoenolpyruvate carboxylase</fullName>
        <shortName evidence="1">PEPC</shortName>
        <shortName evidence="1">PEPCase</shortName>
        <ecNumber evidence="1">4.1.1.31</ecNumber>
    </recommendedName>
</protein>
<proteinExistence type="inferred from homology"/>